<organism>
    <name type="scientific">Arabidopsis thaliana</name>
    <name type="common">Mouse-ear cress</name>
    <dbReference type="NCBI Taxonomy" id="3702"/>
    <lineage>
        <taxon>Eukaryota</taxon>
        <taxon>Viridiplantae</taxon>
        <taxon>Streptophyta</taxon>
        <taxon>Embryophyta</taxon>
        <taxon>Tracheophyta</taxon>
        <taxon>Spermatophyta</taxon>
        <taxon>Magnoliopsida</taxon>
        <taxon>eudicotyledons</taxon>
        <taxon>Gunneridae</taxon>
        <taxon>Pentapetalae</taxon>
        <taxon>rosids</taxon>
        <taxon>malvids</taxon>
        <taxon>Brassicales</taxon>
        <taxon>Brassicaceae</taxon>
        <taxon>Camelineae</taxon>
        <taxon>Arabidopsis</taxon>
    </lineage>
</organism>
<sequence length="540" mass="59224">MSSFDPPNHRYSALVLILLLLGFSVAAADDVSWTEDSSLESPGCTNKFQMVKVLNWVDGVEGDFLTGLTAQFGAALPSVPDQALRFPAAFVDPLDSCSHLSSRLDGHIALSIRGNCAFTEKAKHAEAAGASALLVINDKEDLDEMGCMEKDTSLNVSIPVLMISKSSGDALNKSMVDNKNVELLLYAPKRPAVDLTAGLLLLMAVGTVVVASLWSELTDPDQANESYSILAKDVSSAGTRKDDPEKEILDISVTGAVFFIVTASIFLLLLFYFMSSWFVWVLTIFFCIGGMQGMHNIIMAVILRKCRHLARKSVKLPLLGTMSVLSLLVNIVCLAFAVFWFIKRHTSYSWVGQDILGICLMITALQVVRLPNIKVATVLLCCAFVYDIFWVFISPLIFHESVMIVVAQGDSSTGESIPMLLRIPRFFDPWGGYDMIGFGDILFPGLLISFASRYDKIKKRVISNGYFLWLTIGYGIGLLLTYLGLYLMDGHGQPALLYIVPCTLGLAVILGLVRGELKELWNYGIEESESHTPEDPMPVA</sequence>
<accession>Q4V3B8</accession>
<accession>Q9ZW87</accession>
<reference key="1">
    <citation type="journal article" date="1999" name="Nature">
        <title>Sequence and analysis of chromosome 2 of the plant Arabidopsis thaliana.</title>
        <authorList>
            <person name="Lin X."/>
            <person name="Kaul S."/>
            <person name="Rounsley S.D."/>
            <person name="Shea T.P."/>
            <person name="Benito M.-I."/>
            <person name="Town C.D."/>
            <person name="Fujii C.Y."/>
            <person name="Mason T.M."/>
            <person name="Bowman C.L."/>
            <person name="Barnstead M.E."/>
            <person name="Feldblyum T.V."/>
            <person name="Buell C.R."/>
            <person name="Ketchum K.A."/>
            <person name="Lee J.J."/>
            <person name="Ronning C.M."/>
            <person name="Koo H.L."/>
            <person name="Moffat K.S."/>
            <person name="Cronin L.A."/>
            <person name="Shen M."/>
            <person name="Pai G."/>
            <person name="Van Aken S."/>
            <person name="Umayam L."/>
            <person name="Tallon L.J."/>
            <person name="Gill J.E."/>
            <person name="Adams M.D."/>
            <person name="Carrera A.J."/>
            <person name="Creasy T.H."/>
            <person name="Goodman H.M."/>
            <person name="Somerville C.R."/>
            <person name="Copenhaver G.P."/>
            <person name="Preuss D."/>
            <person name="Nierman W.C."/>
            <person name="White O."/>
            <person name="Eisen J.A."/>
            <person name="Salzberg S.L."/>
            <person name="Fraser C.M."/>
            <person name="Venter J.C."/>
        </authorList>
    </citation>
    <scope>NUCLEOTIDE SEQUENCE [LARGE SCALE GENOMIC DNA]</scope>
    <source>
        <strain>cv. Columbia</strain>
    </source>
</reference>
<reference key="2">
    <citation type="journal article" date="2017" name="Plant J.">
        <title>Araport11: a complete reannotation of the Arabidopsis thaliana reference genome.</title>
        <authorList>
            <person name="Cheng C.Y."/>
            <person name="Krishnakumar V."/>
            <person name="Chan A.P."/>
            <person name="Thibaud-Nissen F."/>
            <person name="Schobel S."/>
            <person name="Town C.D."/>
        </authorList>
    </citation>
    <scope>GENOME REANNOTATION</scope>
    <source>
        <strain>cv. Columbia</strain>
    </source>
</reference>
<reference key="3">
    <citation type="submission" date="2005-05" db="EMBL/GenBank/DDBJ databases">
        <title>Arabidopsis ORF clones.</title>
        <authorList>
            <person name="Cheuk R.F."/>
            <person name="Chen H."/>
            <person name="Kim C.J."/>
            <person name="Shinn P."/>
            <person name="Ecker J.R."/>
        </authorList>
    </citation>
    <scope>NUCLEOTIDE SEQUENCE [LARGE SCALE MRNA]</scope>
    <source>
        <strain>cv. Columbia</strain>
    </source>
</reference>
<reference key="4">
    <citation type="submission" date="2006-07" db="EMBL/GenBank/DDBJ databases">
        <title>Large-scale analysis of RIKEN Arabidopsis full-length (RAFL) cDNAs.</title>
        <authorList>
            <person name="Totoki Y."/>
            <person name="Seki M."/>
            <person name="Ishida J."/>
            <person name="Nakajima M."/>
            <person name="Enju A."/>
            <person name="Kamiya A."/>
            <person name="Narusaka M."/>
            <person name="Shin-i T."/>
            <person name="Nakagawa M."/>
            <person name="Sakamoto N."/>
            <person name="Oishi K."/>
            <person name="Kohara Y."/>
            <person name="Kobayashi M."/>
            <person name="Toyoda A."/>
            <person name="Sakaki Y."/>
            <person name="Sakurai T."/>
            <person name="Iida K."/>
            <person name="Akiyama K."/>
            <person name="Satou M."/>
            <person name="Toyoda T."/>
            <person name="Konagaya A."/>
            <person name="Carninci P."/>
            <person name="Kawai J."/>
            <person name="Hayashizaki Y."/>
            <person name="Shinozaki K."/>
        </authorList>
    </citation>
    <scope>NUCLEOTIDE SEQUENCE [LARGE SCALE MRNA]</scope>
    <source>
        <strain>cv. Columbia</strain>
    </source>
</reference>
<reference key="5">
    <citation type="journal article" date="2008" name="FEBS J.">
        <title>Signal peptide peptidase and its homologs in Arabidopsis thaliana - plant tissue-specific expression and distinct subcellular localization.</title>
        <authorList>
            <person name="Tamura T."/>
            <person name="Asakura T."/>
            <person name="Uemura T."/>
            <person name="Ueda T."/>
            <person name="Terauchi K."/>
            <person name="Misaka T."/>
            <person name="Abe K."/>
        </authorList>
    </citation>
    <scope>GENE FAMILY</scope>
    <scope>NOMENCLATURE</scope>
    <scope>TISSUE SPECIFICITY</scope>
    <scope>DEVELOPMENTAL STAGE</scope>
    <scope>SUBCELLULAR LOCATION</scope>
</reference>
<evidence type="ECO:0000250" key="1"/>
<evidence type="ECO:0000255" key="2"/>
<evidence type="ECO:0000269" key="3">
    <source>
    </source>
</evidence>
<evidence type="ECO:0000305" key="4"/>
<feature type="signal peptide" evidence="2">
    <location>
        <begin position="1"/>
        <end position="28"/>
    </location>
</feature>
<feature type="chain" id="PRO_0000419095" description="Signal peptide peptidase-like 3">
    <location>
        <begin position="29"/>
        <end position="540"/>
    </location>
</feature>
<feature type="topological domain" description="Lumenal" evidence="2">
    <location>
        <begin position="29"/>
        <end position="194"/>
    </location>
</feature>
<feature type="transmembrane region" description="Helical" evidence="2">
    <location>
        <begin position="195"/>
        <end position="215"/>
    </location>
</feature>
<feature type="topological domain" description="Cytoplasmic" evidence="2">
    <location>
        <begin position="216"/>
        <end position="250"/>
    </location>
</feature>
<feature type="transmembrane region" description="Helical" evidence="2">
    <location>
        <begin position="251"/>
        <end position="273"/>
    </location>
</feature>
<feature type="topological domain" description="Lumenal" evidence="2">
    <location>
        <begin position="274"/>
        <end position="276"/>
    </location>
</feature>
<feature type="transmembrane region" description="Helical" evidence="2">
    <location>
        <begin position="277"/>
        <end position="299"/>
    </location>
</feature>
<feature type="topological domain" description="Cytoplasmic" evidence="2">
    <location>
        <begin position="300"/>
        <end position="321"/>
    </location>
</feature>
<feature type="transmembrane region" description="Helical" evidence="2">
    <location>
        <begin position="322"/>
        <end position="342"/>
    </location>
</feature>
<feature type="topological domain" description="Lumenal" evidence="2">
    <location>
        <begin position="343"/>
        <end position="347"/>
    </location>
</feature>
<feature type="transmembrane region" description="Helical" evidence="2">
    <location>
        <begin position="348"/>
        <end position="368"/>
    </location>
</feature>
<feature type="topological domain" description="Cytoplasmic" evidence="2">
    <location>
        <begin position="369"/>
        <end position="377"/>
    </location>
</feature>
<feature type="transmembrane region" description="Helical" evidence="2">
    <location>
        <begin position="378"/>
        <end position="398"/>
    </location>
</feature>
<feature type="topological domain" description="Lumenal" evidence="2">
    <location>
        <begin position="399"/>
        <end position="429"/>
    </location>
</feature>
<feature type="transmembrane region" description="Helical" evidence="2">
    <location>
        <begin position="430"/>
        <end position="450"/>
    </location>
</feature>
<feature type="topological domain" description="Cytoplasmic" evidence="2">
    <location>
        <begin position="451"/>
        <end position="466"/>
    </location>
</feature>
<feature type="transmembrane region" description="Helical" evidence="2">
    <location>
        <begin position="467"/>
        <end position="487"/>
    </location>
</feature>
<feature type="topological domain" description="Lumenal" evidence="2">
    <location>
        <begin position="488"/>
        <end position="492"/>
    </location>
</feature>
<feature type="transmembrane region" description="Helical" evidence="2">
    <location>
        <begin position="493"/>
        <end position="513"/>
    </location>
</feature>
<feature type="topological domain" description="Cytoplasmic" evidence="2">
    <location>
        <begin position="514"/>
        <end position="540"/>
    </location>
</feature>
<feature type="domain" description="PA">
    <location>
        <begin position="98"/>
        <end position="172"/>
    </location>
</feature>
<feature type="short sequence motif" description="PAL">
    <location>
        <begin position="494"/>
        <end position="496"/>
    </location>
</feature>
<feature type="active site" evidence="1">
    <location>
        <position position="387"/>
    </location>
</feature>
<feature type="active site" evidence="1">
    <location>
        <position position="440"/>
    </location>
</feature>
<feature type="glycosylation site" description="N-linked (GlcNAc...) asparagine" evidence="2">
    <location>
        <position position="155"/>
    </location>
</feature>
<feature type="glycosylation site" description="N-linked (GlcNAc...) asparagine" evidence="2">
    <location>
        <position position="172"/>
    </location>
</feature>
<protein>
    <recommendedName>
        <fullName>Signal peptide peptidase-like 3</fullName>
        <shortName>AtSPPL3</shortName>
        <ecNumber>3.4.23.-</ecNumber>
    </recommendedName>
</protein>
<comment type="function">
    <text evidence="1">Intramembrane-cleaving aspartic protease (I-CLiP) that cleaves type II membrane signal peptides in the hydrophobic plane of the membrane.</text>
</comment>
<comment type="subcellular location">
    <subcellularLocation>
        <location evidence="3">Endosome membrane</location>
        <topology evidence="3">Multi-pass membrane protein</topology>
    </subcellularLocation>
</comment>
<comment type="tissue specificity">
    <text evidence="3">Ubiquitous.</text>
</comment>
<comment type="developmental stage">
    <text evidence="3">Expressed in the shoot meristem and root epidermal cells in germinating seeds.</text>
</comment>
<comment type="domain">
    <text evidence="1">The PAL motif is required for normal active site conformation.</text>
</comment>
<comment type="PTM">
    <text evidence="1">Glycosylated.</text>
</comment>
<comment type="similarity">
    <text evidence="4">Belongs to the peptidase A22B family.</text>
</comment>
<comment type="sequence caution" evidence="4">
    <conflict type="erroneous gene model prediction">
        <sequence resource="EMBL-CDS" id="AAM14939"/>
    </conflict>
</comment>
<comment type="sequence caution" evidence="4">
    <conflict type="erroneous gene model prediction">
        <sequence resource="EMBL-CDS" id="AAM15159"/>
    </conflict>
</comment>
<keyword id="KW-0967">Endosome</keyword>
<keyword id="KW-0325">Glycoprotein</keyword>
<keyword id="KW-0378">Hydrolase</keyword>
<keyword id="KW-0472">Membrane</keyword>
<keyword id="KW-0645">Protease</keyword>
<keyword id="KW-1185">Reference proteome</keyword>
<keyword id="KW-0732">Signal</keyword>
<keyword id="KW-0812">Transmembrane</keyword>
<keyword id="KW-1133">Transmembrane helix</keyword>
<dbReference type="EC" id="3.4.23.-"/>
<dbReference type="EMBL" id="AC004450">
    <property type="protein sequence ID" value="AAM14939.1"/>
    <property type="status" value="ALT_SEQ"/>
    <property type="molecule type" value="Genomic_DNA"/>
</dbReference>
<dbReference type="EMBL" id="AC006224">
    <property type="protein sequence ID" value="AAM15159.1"/>
    <property type="status" value="ALT_SEQ"/>
    <property type="molecule type" value="Genomic_DNA"/>
</dbReference>
<dbReference type="EMBL" id="CP002685">
    <property type="protein sequence ID" value="AEC10205.1"/>
    <property type="molecule type" value="Genomic_DNA"/>
</dbReference>
<dbReference type="EMBL" id="BT023438">
    <property type="protein sequence ID" value="AAY56429.1"/>
    <property type="molecule type" value="mRNA"/>
</dbReference>
<dbReference type="EMBL" id="AK229438">
    <property type="protein sequence ID" value="BAF01298.1"/>
    <property type="molecule type" value="mRNA"/>
</dbReference>
<dbReference type="PIR" id="F84861">
    <property type="entry name" value="F84861"/>
</dbReference>
<dbReference type="RefSeq" id="NP_001318409.1">
    <property type="nucleotide sequence ID" value="NM_001337011.1"/>
</dbReference>
<dbReference type="SMR" id="Q4V3B8"/>
<dbReference type="BioGRID" id="4246">
    <property type="interactions" value="1"/>
</dbReference>
<dbReference type="FunCoup" id="Q4V3B8">
    <property type="interactions" value="2542"/>
</dbReference>
<dbReference type="IntAct" id="Q4V3B8">
    <property type="interactions" value="1"/>
</dbReference>
<dbReference type="STRING" id="3702.Q4V3B8"/>
<dbReference type="MEROPS" id="A22.A06"/>
<dbReference type="GlyCosmos" id="Q4V3B8">
    <property type="glycosylation" value="2 sites, No reported glycans"/>
</dbReference>
<dbReference type="GlyGen" id="Q4V3B8">
    <property type="glycosylation" value="2 sites"/>
</dbReference>
<dbReference type="PaxDb" id="3702-AT2G43070.1"/>
<dbReference type="ProteomicsDB" id="234563"/>
<dbReference type="EnsemblPlants" id="AT2G43070.1">
    <property type="protein sequence ID" value="AT2G43070.1"/>
    <property type="gene ID" value="AT2G43070"/>
</dbReference>
<dbReference type="GeneID" id="818909"/>
<dbReference type="Gramene" id="AT2G43070.1">
    <property type="protein sequence ID" value="AT2G43070.1"/>
    <property type="gene ID" value="AT2G43070"/>
</dbReference>
<dbReference type="KEGG" id="ath:AT2G43070"/>
<dbReference type="Araport" id="AT2G43070"/>
<dbReference type="TAIR" id="AT2G43070">
    <property type="gene designation" value="SPPL3"/>
</dbReference>
<dbReference type="eggNOG" id="KOG2442">
    <property type="taxonomic scope" value="Eukaryota"/>
</dbReference>
<dbReference type="HOGENOM" id="CLU_023799_4_1_1"/>
<dbReference type="InParanoid" id="Q4V3B8"/>
<dbReference type="OrthoDB" id="29661at2759"/>
<dbReference type="PhylomeDB" id="Q4V3B8"/>
<dbReference type="PRO" id="PR:Q4V3B8"/>
<dbReference type="Proteomes" id="UP000006548">
    <property type="component" value="Chromosome 2"/>
</dbReference>
<dbReference type="ExpressionAtlas" id="Q4V3B8">
    <property type="expression patterns" value="baseline and differential"/>
</dbReference>
<dbReference type="GO" id="GO:0005768">
    <property type="term" value="C:endosome"/>
    <property type="evidence" value="ECO:0000304"/>
    <property type="project" value="UniProtKB"/>
</dbReference>
<dbReference type="GO" id="GO:0010008">
    <property type="term" value="C:endosome membrane"/>
    <property type="evidence" value="ECO:0007669"/>
    <property type="project" value="UniProtKB-SubCell"/>
</dbReference>
<dbReference type="GO" id="GO:0000325">
    <property type="term" value="C:plant-type vacuole"/>
    <property type="evidence" value="ECO:0007005"/>
    <property type="project" value="TAIR"/>
</dbReference>
<dbReference type="GO" id="GO:0042500">
    <property type="term" value="F:aspartic endopeptidase activity, intramembrane cleaving"/>
    <property type="evidence" value="ECO:0007669"/>
    <property type="project" value="InterPro"/>
</dbReference>
<dbReference type="GO" id="GO:0006508">
    <property type="term" value="P:proteolysis"/>
    <property type="evidence" value="ECO:0007669"/>
    <property type="project" value="UniProtKB-KW"/>
</dbReference>
<dbReference type="CDD" id="cd02132">
    <property type="entry name" value="PA_GO-like"/>
    <property type="match status" value="1"/>
</dbReference>
<dbReference type="FunFam" id="3.50.30.30:FF:000007">
    <property type="entry name" value="Signal peptide peptidase-like 3"/>
    <property type="match status" value="1"/>
</dbReference>
<dbReference type="Gene3D" id="3.50.30.30">
    <property type="match status" value="1"/>
</dbReference>
<dbReference type="InterPro" id="IPR046450">
    <property type="entry name" value="PA_dom_sf"/>
</dbReference>
<dbReference type="InterPro" id="IPR003137">
    <property type="entry name" value="PA_domain"/>
</dbReference>
<dbReference type="InterPro" id="IPR007369">
    <property type="entry name" value="Peptidase_A22B_SPP"/>
</dbReference>
<dbReference type="InterPro" id="IPR006639">
    <property type="entry name" value="Preselin/SPP"/>
</dbReference>
<dbReference type="PANTHER" id="PTHR12174">
    <property type="entry name" value="SIGNAL PEPTIDE PEPTIDASE"/>
    <property type="match status" value="1"/>
</dbReference>
<dbReference type="PANTHER" id="PTHR12174:SF90">
    <property type="entry name" value="SIGNAL PEPTIDE PEPTIDASE-LIKE 3"/>
    <property type="match status" value="1"/>
</dbReference>
<dbReference type="Pfam" id="PF02225">
    <property type="entry name" value="PA"/>
    <property type="match status" value="1"/>
</dbReference>
<dbReference type="Pfam" id="PF04258">
    <property type="entry name" value="Peptidase_A22B"/>
    <property type="match status" value="1"/>
</dbReference>
<dbReference type="SMART" id="SM00730">
    <property type="entry name" value="PSN"/>
    <property type="match status" value="1"/>
</dbReference>
<dbReference type="SUPFAM" id="SSF52025">
    <property type="entry name" value="PA domain"/>
    <property type="match status" value="1"/>
</dbReference>
<name>SIPL3_ARATH</name>
<proteinExistence type="evidence at transcript level"/>
<gene>
    <name type="primary">SPPL3</name>
    <name type="ordered locus">At2g43070</name>
    <name type="ORF">F14B2</name>
    <name type="ORF">MLF8</name>
</gene>